<reference key="1">
    <citation type="submission" date="2006-12" db="EMBL/GenBank/DDBJ databases">
        <title>Complete sequence of chromosome 1 of Verminephrobacter eiseniae EF01-2.</title>
        <authorList>
            <person name="Copeland A."/>
            <person name="Lucas S."/>
            <person name="Lapidus A."/>
            <person name="Barry K."/>
            <person name="Detter J.C."/>
            <person name="Glavina del Rio T."/>
            <person name="Dalin E."/>
            <person name="Tice H."/>
            <person name="Pitluck S."/>
            <person name="Chertkov O."/>
            <person name="Brettin T."/>
            <person name="Bruce D."/>
            <person name="Han C."/>
            <person name="Tapia R."/>
            <person name="Gilna P."/>
            <person name="Schmutz J."/>
            <person name="Larimer F."/>
            <person name="Land M."/>
            <person name="Hauser L."/>
            <person name="Kyrpides N."/>
            <person name="Kim E."/>
            <person name="Stahl D."/>
            <person name="Richardson P."/>
        </authorList>
    </citation>
    <scope>NUCLEOTIDE SEQUENCE [LARGE SCALE GENOMIC DNA]</scope>
    <source>
        <strain>EF01-2</strain>
    </source>
</reference>
<sequence length="183" mass="18605">MNLRIGEGWDVHALVPGRRLVIGGVELEHPMGLGLLGHSDADVLLHAITDALLGAAALGDIGRHFPDTDAAFRAADSRLLLAEAARRVRAAGYEIGNIDSTVVAQAPRLAAHIPAMRLAIARALGVDQGQVNVKAKTAEGLGPVGQNLAIEARAVALICATPGAGAIGPAAQRVSSAWSGSGA</sequence>
<keyword id="KW-0414">Isoprene biosynthesis</keyword>
<keyword id="KW-0456">Lyase</keyword>
<keyword id="KW-0479">Metal-binding</keyword>
<keyword id="KW-1185">Reference proteome</keyword>
<accession>A1WR07</accession>
<proteinExistence type="inferred from homology"/>
<name>ISPF_VEREI</name>
<comment type="function">
    <text evidence="1">Involved in the biosynthesis of isopentenyl diphosphate (IPP) and dimethylallyl diphosphate (DMAPP), two major building blocks of isoprenoid compounds. Catalyzes the conversion of 4-diphosphocytidyl-2-C-methyl-D-erythritol 2-phosphate (CDP-ME2P) to 2-C-methyl-D-erythritol 2,4-cyclodiphosphate (ME-CPP) with a corresponding release of cytidine 5-monophosphate (CMP).</text>
</comment>
<comment type="catalytic activity">
    <reaction evidence="1">
        <text>4-CDP-2-C-methyl-D-erythritol 2-phosphate = 2-C-methyl-D-erythritol 2,4-cyclic diphosphate + CMP</text>
        <dbReference type="Rhea" id="RHEA:23864"/>
        <dbReference type="ChEBI" id="CHEBI:57919"/>
        <dbReference type="ChEBI" id="CHEBI:58483"/>
        <dbReference type="ChEBI" id="CHEBI:60377"/>
        <dbReference type="EC" id="4.6.1.12"/>
    </reaction>
</comment>
<comment type="cofactor">
    <cofactor evidence="1">
        <name>a divalent metal cation</name>
        <dbReference type="ChEBI" id="CHEBI:60240"/>
    </cofactor>
    <text evidence="1">Binds 1 divalent metal cation per subunit.</text>
</comment>
<comment type="pathway">
    <text evidence="1">Isoprenoid biosynthesis; isopentenyl diphosphate biosynthesis via DXP pathway; isopentenyl diphosphate from 1-deoxy-D-xylulose 5-phosphate: step 4/6.</text>
</comment>
<comment type="subunit">
    <text evidence="1">Homotrimer.</text>
</comment>
<comment type="similarity">
    <text evidence="1">Belongs to the IspF family.</text>
</comment>
<organism>
    <name type="scientific">Verminephrobacter eiseniae (strain EF01-2)</name>
    <dbReference type="NCBI Taxonomy" id="391735"/>
    <lineage>
        <taxon>Bacteria</taxon>
        <taxon>Pseudomonadati</taxon>
        <taxon>Pseudomonadota</taxon>
        <taxon>Betaproteobacteria</taxon>
        <taxon>Burkholderiales</taxon>
        <taxon>Comamonadaceae</taxon>
        <taxon>Verminephrobacter</taxon>
    </lineage>
</organism>
<evidence type="ECO:0000255" key="1">
    <source>
        <dbReference type="HAMAP-Rule" id="MF_00107"/>
    </source>
</evidence>
<protein>
    <recommendedName>
        <fullName evidence="1">2-C-methyl-D-erythritol 2,4-cyclodiphosphate synthase</fullName>
        <shortName evidence="1">MECDP-synthase</shortName>
        <shortName evidence="1">MECPP-synthase</shortName>
        <shortName evidence="1">MECPS</shortName>
        <ecNumber evidence="1">4.6.1.12</ecNumber>
    </recommendedName>
</protein>
<gene>
    <name evidence="1" type="primary">ispF</name>
    <name type="ordered locus">Veis_4361</name>
</gene>
<feature type="chain" id="PRO_1000202889" description="2-C-methyl-D-erythritol 2,4-cyclodiphosphate synthase">
    <location>
        <begin position="1"/>
        <end position="183"/>
    </location>
</feature>
<feature type="binding site" evidence="1">
    <location>
        <begin position="10"/>
        <end position="12"/>
    </location>
    <ligand>
        <name>4-CDP-2-C-methyl-D-erythritol 2-phosphate</name>
        <dbReference type="ChEBI" id="CHEBI:57919"/>
    </ligand>
</feature>
<feature type="binding site" evidence="1">
    <location>
        <position position="10"/>
    </location>
    <ligand>
        <name>a divalent metal cation</name>
        <dbReference type="ChEBI" id="CHEBI:60240"/>
    </ligand>
</feature>
<feature type="binding site" evidence="1">
    <location>
        <position position="12"/>
    </location>
    <ligand>
        <name>a divalent metal cation</name>
        <dbReference type="ChEBI" id="CHEBI:60240"/>
    </ligand>
</feature>
<feature type="binding site" evidence="1">
    <location>
        <begin position="38"/>
        <end position="39"/>
    </location>
    <ligand>
        <name>4-CDP-2-C-methyl-D-erythritol 2-phosphate</name>
        <dbReference type="ChEBI" id="CHEBI:57919"/>
    </ligand>
</feature>
<feature type="binding site" evidence="1">
    <location>
        <position position="46"/>
    </location>
    <ligand>
        <name>a divalent metal cation</name>
        <dbReference type="ChEBI" id="CHEBI:60240"/>
    </ligand>
</feature>
<feature type="binding site" evidence="1">
    <location>
        <begin position="60"/>
        <end position="62"/>
    </location>
    <ligand>
        <name>4-CDP-2-C-methyl-D-erythritol 2-phosphate</name>
        <dbReference type="ChEBI" id="CHEBI:57919"/>
    </ligand>
</feature>
<feature type="binding site" evidence="1">
    <location>
        <begin position="65"/>
        <end position="69"/>
    </location>
    <ligand>
        <name>4-CDP-2-C-methyl-D-erythritol 2-phosphate</name>
        <dbReference type="ChEBI" id="CHEBI:57919"/>
    </ligand>
</feature>
<feature type="site" description="Transition state stabilizer" evidence="1">
    <location>
        <position position="38"/>
    </location>
</feature>
<feature type="site" description="Transition state stabilizer" evidence="1">
    <location>
        <position position="137"/>
    </location>
</feature>
<dbReference type="EC" id="4.6.1.12" evidence="1"/>
<dbReference type="EMBL" id="CP000542">
    <property type="protein sequence ID" value="ABM60064.1"/>
    <property type="molecule type" value="Genomic_DNA"/>
</dbReference>
<dbReference type="RefSeq" id="WP_011812050.1">
    <property type="nucleotide sequence ID" value="NC_008786.1"/>
</dbReference>
<dbReference type="SMR" id="A1WR07"/>
<dbReference type="STRING" id="391735.Veis_4361"/>
<dbReference type="GeneID" id="76462675"/>
<dbReference type="KEGG" id="vei:Veis_4361"/>
<dbReference type="eggNOG" id="COG0245">
    <property type="taxonomic scope" value="Bacteria"/>
</dbReference>
<dbReference type="HOGENOM" id="CLU_084630_2_0_4"/>
<dbReference type="OrthoDB" id="9804336at2"/>
<dbReference type="UniPathway" id="UPA00056">
    <property type="reaction ID" value="UER00095"/>
</dbReference>
<dbReference type="Proteomes" id="UP000000374">
    <property type="component" value="Chromosome"/>
</dbReference>
<dbReference type="GO" id="GO:0008685">
    <property type="term" value="F:2-C-methyl-D-erythritol 2,4-cyclodiphosphate synthase activity"/>
    <property type="evidence" value="ECO:0007669"/>
    <property type="project" value="UniProtKB-UniRule"/>
</dbReference>
<dbReference type="GO" id="GO:0046872">
    <property type="term" value="F:metal ion binding"/>
    <property type="evidence" value="ECO:0007669"/>
    <property type="project" value="UniProtKB-KW"/>
</dbReference>
<dbReference type="GO" id="GO:0019288">
    <property type="term" value="P:isopentenyl diphosphate biosynthetic process, methylerythritol 4-phosphate pathway"/>
    <property type="evidence" value="ECO:0007669"/>
    <property type="project" value="UniProtKB-UniRule"/>
</dbReference>
<dbReference type="GO" id="GO:0016114">
    <property type="term" value="P:terpenoid biosynthetic process"/>
    <property type="evidence" value="ECO:0007669"/>
    <property type="project" value="InterPro"/>
</dbReference>
<dbReference type="CDD" id="cd00554">
    <property type="entry name" value="MECDP_synthase"/>
    <property type="match status" value="1"/>
</dbReference>
<dbReference type="FunFam" id="3.30.1330.50:FF:000001">
    <property type="entry name" value="2-C-methyl-D-erythritol 2,4-cyclodiphosphate synthase"/>
    <property type="match status" value="1"/>
</dbReference>
<dbReference type="Gene3D" id="3.30.1330.50">
    <property type="entry name" value="2-C-methyl-D-erythritol 2,4-cyclodiphosphate synthase"/>
    <property type="match status" value="1"/>
</dbReference>
<dbReference type="HAMAP" id="MF_00107">
    <property type="entry name" value="IspF"/>
    <property type="match status" value="1"/>
</dbReference>
<dbReference type="InterPro" id="IPR003526">
    <property type="entry name" value="MECDP_synthase"/>
</dbReference>
<dbReference type="InterPro" id="IPR020555">
    <property type="entry name" value="MECDP_synthase_CS"/>
</dbReference>
<dbReference type="InterPro" id="IPR036571">
    <property type="entry name" value="MECDP_synthase_sf"/>
</dbReference>
<dbReference type="NCBIfam" id="TIGR00151">
    <property type="entry name" value="ispF"/>
    <property type="match status" value="1"/>
</dbReference>
<dbReference type="PANTHER" id="PTHR43181">
    <property type="entry name" value="2-C-METHYL-D-ERYTHRITOL 2,4-CYCLODIPHOSPHATE SYNTHASE, CHLOROPLASTIC"/>
    <property type="match status" value="1"/>
</dbReference>
<dbReference type="PANTHER" id="PTHR43181:SF1">
    <property type="entry name" value="2-C-METHYL-D-ERYTHRITOL 2,4-CYCLODIPHOSPHATE SYNTHASE, CHLOROPLASTIC"/>
    <property type="match status" value="1"/>
</dbReference>
<dbReference type="Pfam" id="PF02542">
    <property type="entry name" value="YgbB"/>
    <property type="match status" value="1"/>
</dbReference>
<dbReference type="SUPFAM" id="SSF69765">
    <property type="entry name" value="IpsF-like"/>
    <property type="match status" value="1"/>
</dbReference>
<dbReference type="PROSITE" id="PS01350">
    <property type="entry name" value="ISPF"/>
    <property type="match status" value="1"/>
</dbReference>